<keyword id="KW-0223">Dioxygenase</keyword>
<keyword id="KW-0408">Iron</keyword>
<keyword id="KW-0479">Metal-binding</keyword>
<keyword id="KW-0560">Oxidoreductase</keyword>
<keyword id="KW-1185">Reference proteome</keyword>
<organism>
    <name type="scientific">Arabidopsis thaliana</name>
    <name type="common">Mouse-ear cress</name>
    <dbReference type="NCBI Taxonomy" id="3702"/>
    <lineage>
        <taxon>Eukaryota</taxon>
        <taxon>Viridiplantae</taxon>
        <taxon>Streptophyta</taxon>
        <taxon>Embryophyta</taxon>
        <taxon>Tracheophyta</taxon>
        <taxon>Spermatophyta</taxon>
        <taxon>Magnoliopsida</taxon>
        <taxon>eudicotyledons</taxon>
        <taxon>Gunneridae</taxon>
        <taxon>Pentapetalae</taxon>
        <taxon>rosids</taxon>
        <taxon>malvids</taxon>
        <taxon>Brassicales</taxon>
        <taxon>Brassicaceae</taxon>
        <taxon>Camelineae</taxon>
        <taxon>Arabidopsis</taxon>
    </lineage>
</organism>
<sequence>MVIVLQPASFDSNLYVNPKCKPRPVLIPVIDLTDSDAKTQIVKACEEFGFFKVINHGVRPDLLTQLEQEAINFFALHHSLKDKAGPPDPFGYGTKRIGPNGDLGWLEYILLNANLCLESHKTTAIFRHTPAIFREAVEEYIKEMKRMSSKFLEMVEEELKIEPKEKLSRLVKVKESDSCLRMNHYPEKEETPVKEEIGFGEHTDPQLISLLRSNDTEGLQICVKDGTWVDVTPDHSSFFVLVGDTLQVMTNGRFKSVKHRVVTNTKRSRISMIYFAGPPLSEKIAPLSCLVPKQDDCLYNEFTWSQYKLSAYKTKLGDYRLGLFEKRPPFSLSNV</sequence>
<gene>
    <name type="primary">GA2OX3</name>
    <name type="ordered locus">At2g34555</name>
    <name type="ORF">T31E10.11</name>
</gene>
<feature type="chain" id="PRO_0000067307" description="Gibberellin 2-beta-dioxygenase 3">
    <location>
        <begin position="1"/>
        <end position="335"/>
    </location>
</feature>
<feature type="domain" description="Fe2OG dioxygenase" evidence="2">
    <location>
        <begin position="175"/>
        <end position="278"/>
    </location>
</feature>
<feature type="active site" evidence="1">
    <location>
        <position position="269"/>
    </location>
</feature>
<feature type="binding site" evidence="2">
    <location>
        <position position="202"/>
    </location>
    <ligand>
        <name>Fe cation</name>
        <dbReference type="ChEBI" id="CHEBI:24875"/>
    </ligand>
</feature>
<feature type="binding site" evidence="2">
    <location>
        <position position="204"/>
    </location>
    <ligand>
        <name>Fe cation</name>
        <dbReference type="ChEBI" id="CHEBI:24875"/>
    </ligand>
</feature>
<feature type="binding site" evidence="2">
    <location>
        <position position="259"/>
    </location>
    <ligand>
        <name>Fe cation</name>
        <dbReference type="ChEBI" id="CHEBI:24875"/>
    </ligand>
</feature>
<reference key="1">
    <citation type="journal article" date="1999" name="Proc. Natl. Acad. Sci. U.S.A.">
        <title>Molecular cloning and functional expression of gibberellin 2-oxidases, multifunctional enzymes involved in gibberellin deactivation.</title>
        <authorList>
            <person name="Thomas S.G."/>
            <person name="Phillips A.L."/>
            <person name="Hedden P."/>
        </authorList>
    </citation>
    <scope>NUCLEOTIDE SEQUENCE [MRNA]</scope>
    <scope>FUNCTION</scope>
    <source>
        <strain>cv. Columbia</strain>
    </source>
</reference>
<reference key="2">
    <citation type="journal article" date="1999" name="Nature">
        <title>Sequence and analysis of chromosome 2 of the plant Arabidopsis thaliana.</title>
        <authorList>
            <person name="Lin X."/>
            <person name="Kaul S."/>
            <person name="Rounsley S.D."/>
            <person name="Shea T.P."/>
            <person name="Benito M.-I."/>
            <person name="Town C.D."/>
            <person name="Fujii C.Y."/>
            <person name="Mason T.M."/>
            <person name="Bowman C.L."/>
            <person name="Barnstead M.E."/>
            <person name="Feldblyum T.V."/>
            <person name="Buell C.R."/>
            <person name="Ketchum K.A."/>
            <person name="Lee J.J."/>
            <person name="Ronning C.M."/>
            <person name="Koo H.L."/>
            <person name="Moffat K.S."/>
            <person name="Cronin L.A."/>
            <person name="Shen M."/>
            <person name="Pai G."/>
            <person name="Van Aken S."/>
            <person name="Umayam L."/>
            <person name="Tallon L.J."/>
            <person name="Gill J.E."/>
            <person name="Adams M.D."/>
            <person name="Carrera A.J."/>
            <person name="Creasy T.H."/>
            <person name="Goodman H.M."/>
            <person name="Somerville C.R."/>
            <person name="Copenhaver G.P."/>
            <person name="Preuss D."/>
            <person name="Nierman W.C."/>
            <person name="White O."/>
            <person name="Eisen J.A."/>
            <person name="Salzberg S.L."/>
            <person name="Fraser C.M."/>
            <person name="Venter J.C."/>
        </authorList>
    </citation>
    <scope>NUCLEOTIDE SEQUENCE [LARGE SCALE GENOMIC DNA]</scope>
    <source>
        <strain>cv. Columbia</strain>
    </source>
</reference>
<reference key="3">
    <citation type="journal article" date="2017" name="Plant J.">
        <title>Araport11: a complete reannotation of the Arabidopsis thaliana reference genome.</title>
        <authorList>
            <person name="Cheng C.Y."/>
            <person name="Krishnakumar V."/>
            <person name="Chan A.P."/>
            <person name="Thibaud-Nissen F."/>
            <person name="Schobel S."/>
            <person name="Town C.D."/>
        </authorList>
    </citation>
    <scope>GENOME REANNOTATION</scope>
    <source>
        <strain>cv. Columbia</strain>
    </source>
</reference>
<reference key="4">
    <citation type="journal article" date="2005" name="Curr. Biol.">
        <title>KNOX action in Arabidopsis is mediated by coordinate regulation of cytokinin and gibberellin activities.</title>
        <authorList>
            <person name="Jasinski S."/>
            <person name="Piazza P."/>
            <person name="Craft J."/>
            <person name="Hay A."/>
            <person name="Woolley L."/>
            <person name="Rieu I."/>
            <person name="Phillips A."/>
            <person name="Hedden P."/>
            <person name="Tsiantis M."/>
        </authorList>
    </citation>
    <scope>TISSUE SPECIFICITY</scope>
</reference>
<reference key="5">
    <citation type="journal article" date="2006" name="Plant Physiol.">
        <title>Transcriptional regulation of gibberellin metabolism genes by auxin signaling in Arabidopsis.</title>
        <authorList>
            <person name="Frigerio M."/>
            <person name="Alabadi D."/>
            <person name="Perez-Gomez J."/>
            <person name="Garcia-Carcel L."/>
            <person name="Phillips A.L."/>
            <person name="Hedden P."/>
            <person name="Blazquez M.A."/>
        </authorList>
    </citation>
    <scope>INDUCTION BY AUXIN AND PACLOBUTRAZOL</scope>
</reference>
<reference key="6">
    <citation type="journal article" date="2008" name="Plant Cell">
        <title>Genetic analysis reveals that C19-GA 2-oxidation is a major gibberellin inactivation pathway in Arabidopsis.</title>
        <authorList>
            <person name="Rieu I."/>
            <person name="Eriksson S."/>
            <person name="Powers S.J."/>
            <person name="Gong F."/>
            <person name="Griffiths J."/>
            <person name="Woolley L."/>
            <person name="Benlloch R."/>
            <person name="Nilsson O."/>
            <person name="Thomas S.G."/>
            <person name="Hedden P."/>
            <person name="Phillips A.L."/>
        </authorList>
    </citation>
    <scope>FUNCTION</scope>
</reference>
<reference key="7">
    <citation type="journal article" date="2011" name="Gene">
        <title>Evolutionary analysis of three gibberellin oxidase genes in rice, Arabidopsis, and soybean.</title>
        <authorList>
            <person name="Han F."/>
            <person name="Zhu B."/>
        </authorList>
    </citation>
    <scope>GENE FAMILY</scope>
</reference>
<comment type="function">
    <text evidence="3 6">Catalyzes the 2-beta-hydroxylation of several biologically active gibberellins, leading to the homeostatic regulation of their endogenous level. Catabolism of gibberellins (GAs) plays a central role in plant development. Converts GA9/GA20 to GA51/GA29 and GA4/GA1 to GA34/GA8.</text>
</comment>
<comment type="catalytic activity">
    <reaction>
        <text>gibberellin A1 + 2-oxoglutarate + O2 = gibberellin A8 + succinate + CO2</text>
        <dbReference type="Rhea" id="RHEA:15005"/>
        <dbReference type="ChEBI" id="CHEBI:15379"/>
        <dbReference type="ChEBI" id="CHEBI:16526"/>
        <dbReference type="ChEBI" id="CHEBI:16810"/>
        <dbReference type="ChEBI" id="CHEBI:30031"/>
        <dbReference type="ChEBI" id="CHEBI:58524"/>
        <dbReference type="ChEBI" id="CHEBI:58594"/>
        <dbReference type="EC" id="1.14.11.13"/>
    </reaction>
</comment>
<comment type="cofactor">
    <cofactor evidence="2">
        <name>Fe(2+)</name>
        <dbReference type="ChEBI" id="CHEBI:29033"/>
    </cofactor>
    <text evidence="2">Binds 1 Fe(2+) ion per subunit.</text>
</comment>
<comment type="pathway">
    <text>Plant hormone biosynthesis; gibberellin biosynthesis.</text>
</comment>
<comment type="tissue specificity">
    <text evidence="4">Not expressed in the apex.</text>
</comment>
<comment type="induction">
    <text evidence="5">Up-regulated by auxin and paclobutrazol.</text>
</comment>
<comment type="similarity">
    <text evidence="7">Belongs to the iron/ascorbate-dependent oxidoreductase family. GA2OX subfamily.</text>
</comment>
<protein>
    <recommendedName>
        <fullName>Gibberellin 2-beta-dioxygenase 3</fullName>
        <ecNumber>1.14.11.13</ecNumber>
    </recommendedName>
    <alternativeName>
        <fullName>GA 2-oxidase 3</fullName>
    </alternativeName>
    <alternativeName>
        <fullName>Gibberellin 2-beta-hydroxylase 3</fullName>
    </alternativeName>
    <alternativeName>
        <fullName>Gibberellin 2-oxidase 3</fullName>
    </alternativeName>
</protein>
<accession>O64692</accession>
<name>G2OX3_ARATH</name>
<dbReference type="EC" id="1.14.11.13"/>
<dbReference type="EMBL" id="AJ132437">
    <property type="protein sequence ID" value="CAB41009.1"/>
    <property type="molecule type" value="mRNA"/>
</dbReference>
<dbReference type="EMBL" id="AC004077">
    <property type="protein sequence ID" value="AAM14908.1"/>
    <property type="molecule type" value="Genomic_DNA"/>
</dbReference>
<dbReference type="EMBL" id="CP002685">
    <property type="protein sequence ID" value="AEC08989.1"/>
    <property type="molecule type" value="Genomic_DNA"/>
</dbReference>
<dbReference type="PIR" id="T52577">
    <property type="entry name" value="T52577"/>
</dbReference>
<dbReference type="RefSeq" id="NP_181002.1">
    <property type="nucleotide sequence ID" value="NM_129007.2"/>
</dbReference>
<dbReference type="SMR" id="O64692"/>
<dbReference type="FunCoup" id="O64692">
    <property type="interactions" value="21"/>
</dbReference>
<dbReference type="STRING" id="3702.O64692"/>
<dbReference type="PaxDb" id="3702-AT2G34555.1"/>
<dbReference type="ProteomicsDB" id="248475"/>
<dbReference type="EnsemblPlants" id="AT2G34555.1">
    <property type="protein sequence ID" value="AT2G34555.1"/>
    <property type="gene ID" value="AT2G34555"/>
</dbReference>
<dbReference type="GeneID" id="818019"/>
<dbReference type="Gramene" id="AT2G34555.1">
    <property type="protein sequence ID" value="AT2G34555.1"/>
    <property type="gene ID" value="AT2G34555"/>
</dbReference>
<dbReference type="KEGG" id="ath:AT2G34555"/>
<dbReference type="Araport" id="AT2G34555"/>
<dbReference type="TAIR" id="AT2G34555">
    <property type="gene designation" value="ATGA2OX3"/>
</dbReference>
<dbReference type="eggNOG" id="KOG0143">
    <property type="taxonomic scope" value="Eukaryota"/>
</dbReference>
<dbReference type="HOGENOM" id="CLU_010119_16_3_1"/>
<dbReference type="InParanoid" id="O64692"/>
<dbReference type="OMA" id="NLCLESH"/>
<dbReference type="PhylomeDB" id="O64692"/>
<dbReference type="BioCyc" id="ARA:AT2G34555-MONOMER"/>
<dbReference type="BioCyc" id="MetaCyc:AT2G34555-MONOMER"/>
<dbReference type="BRENDA" id="1.14.11.13">
    <property type="organism ID" value="399"/>
</dbReference>
<dbReference type="UniPathway" id="UPA00390"/>
<dbReference type="PRO" id="PR:O64692"/>
<dbReference type="Proteomes" id="UP000006548">
    <property type="component" value="Chromosome 2"/>
</dbReference>
<dbReference type="ExpressionAtlas" id="O64692">
    <property type="expression patterns" value="baseline and differential"/>
</dbReference>
<dbReference type="GO" id="GO:0045543">
    <property type="term" value="F:gibberellin 2-beta-dioxygenase activity"/>
    <property type="evidence" value="ECO:0007669"/>
    <property type="project" value="UniProtKB-EC"/>
</dbReference>
<dbReference type="GO" id="GO:0046872">
    <property type="term" value="F:metal ion binding"/>
    <property type="evidence" value="ECO:0007669"/>
    <property type="project" value="UniProtKB-KW"/>
</dbReference>
<dbReference type="GO" id="GO:0009686">
    <property type="term" value="P:gibberellin biosynthetic process"/>
    <property type="evidence" value="ECO:0000314"/>
    <property type="project" value="CACAO"/>
</dbReference>
<dbReference type="FunFam" id="2.60.120.330:FF:000014">
    <property type="entry name" value="Gibberellin 2-beta-dioxygenase 1"/>
    <property type="match status" value="1"/>
</dbReference>
<dbReference type="Gene3D" id="2.60.120.330">
    <property type="entry name" value="B-lactam Antibiotic, Isopenicillin N Synthase, Chain"/>
    <property type="match status" value="1"/>
</dbReference>
<dbReference type="InterPro" id="IPR026992">
    <property type="entry name" value="DIOX_N"/>
</dbReference>
<dbReference type="InterPro" id="IPR044861">
    <property type="entry name" value="IPNS-like_FE2OG_OXY"/>
</dbReference>
<dbReference type="InterPro" id="IPR027443">
    <property type="entry name" value="IPNS-like_sf"/>
</dbReference>
<dbReference type="InterPro" id="IPR050231">
    <property type="entry name" value="Iron_ascorbate_oxido_reductase"/>
</dbReference>
<dbReference type="InterPro" id="IPR005123">
    <property type="entry name" value="Oxoglu/Fe-dep_dioxygenase_dom"/>
</dbReference>
<dbReference type="PANTHER" id="PTHR47990">
    <property type="entry name" value="2-OXOGLUTARATE (2OG) AND FE(II)-DEPENDENT OXYGENASE SUPERFAMILY PROTEIN-RELATED"/>
    <property type="match status" value="1"/>
</dbReference>
<dbReference type="Pfam" id="PF03171">
    <property type="entry name" value="2OG-FeII_Oxy"/>
    <property type="match status" value="1"/>
</dbReference>
<dbReference type="Pfam" id="PF14226">
    <property type="entry name" value="DIOX_N"/>
    <property type="match status" value="1"/>
</dbReference>
<dbReference type="SUPFAM" id="SSF51197">
    <property type="entry name" value="Clavaminate synthase-like"/>
    <property type="match status" value="1"/>
</dbReference>
<dbReference type="PROSITE" id="PS51471">
    <property type="entry name" value="FE2OG_OXY"/>
    <property type="match status" value="1"/>
</dbReference>
<evidence type="ECO:0000255" key="1"/>
<evidence type="ECO:0000255" key="2">
    <source>
        <dbReference type="PROSITE-ProRule" id="PRU00805"/>
    </source>
</evidence>
<evidence type="ECO:0000269" key="3">
    <source>
    </source>
</evidence>
<evidence type="ECO:0000269" key="4">
    <source>
    </source>
</evidence>
<evidence type="ECO:0000269" key="5">
    <source>
    </source>
</evidence>
<evidence type="ECO:0000269" key="6">
    <source>
    </source>
</evidence>
<evidence type="ECO:0000305" key="7"/>
<proteinExistence type="evidence at transcript level"/>